<evidence type="ECO:0000255" key="1">
    <source>
        <dbReference type="HAMAP-Rule" id="MF_01306"/>
    </source>
</evidence>
<evidence type="ECO:0000256" key="2">
    <source>
        <dbReference type="SAM" id="MobiDB-lite"/>
    </source>
</evidence>
<evidence type="ECO:0000305" key="3"/>
<dbReference type="EMBL" id="AM849034">
    <property type="protein sequence ID" value="CAQ00847.1"/>
    <property type="molecule type" value="Genomic_DNA"/>
</dbReference>
<dbReference type="RefSeq" id="WP_012298156.1">
    <property type="nucleotide sequence ID" value="NZ_MZMN01000003.1"/>
</dbReference>
<dbReference type="SMR" id="B0REK0"/>
<dbReference type="STRING" id="31964.CMS0727"/>
<dbReference type="GeneID" id="92983566"/>
<dbReference type="KEGG" id="cms:CMS0727"/>
<dbReference type="eggNOG" id="COG0522">
    <property type="taxonomic scope" value="Bacteria"/>
</dbReference>
<dbReference type="HOGENOM" id="CLU_092403_0_3_11"/>
<dbReference type="OrthoDB" id="9803672at2"/>
<dbReference type="Proteomes" id="UP000001318">
    <property type="component" value="Chromosome"/>
</dbReference>
<dbReference type="GO" id="GO:0015935">
    <property type="term" value="C:small ribosomal subunit"/>
    <property type="evidence" value="ECO:0007669"/>
    <property type="project" value="InterPro"/>
</dbReference>
<dbReference type="GO" id="GO:0019843">
    <property type="term" value="F:rRNA binding"/>
    <property type="evidence" value="ECO:0007669"/>
    <property type="project" value="UniProtKB-UniRule"/>
</dbReference>
<dbReference type="GO" id="GO:0003735">
    <property type="term" value="F:structural constituent of ribosome"/>
    <property type="evidence" value="ECO:0007669"/>
    <property type="project" value="InterPro"/>
</dbReference>
<dbReference type="GO" id="GO:0042274">
    <property type="term" value="P:ribosomal small subunit biogenesis"/>
    <property type="evidence" value="ECO:0007669"/>
    <property type="project" value="TreeGrafter"/>
</dbReference>
<dbReference type="GO" id="GO:0006412">
    <property type="term" value="P:translation"/>
    <property type="evidence" value="ECO:0007669"/>
    <property type="project" value="UniProtKB-UniRule"/>
</dbReference>
<dbReference type="CDD" id="cd00165">
    <property type="entry name" value="S4"/>
    <property type="match status" value="1"/>
</dbReference>
<dbReference type="FunFam" id="3.10.290.10:FF:000001">
    <property type="entry name" value="30S ribosomal protein S4"/>
    <property type="match status" value="1"/>
</dbReference>
<dbReference type="Gene3D" id="1.10.1050.10">
    <property type="entry name" value="Ribosomal Protein S4 Delta 41, Chain A, domain 1"/>
    <property type="match status" value="1"/>
</dbReference>
<dbReference type="Gene3D" id="3.10.290.10">
    <property type="entry name" value="RNA-binding S4 domain"/>
    <property type="match status" value="1"/>
</dbReference>
<dbReference type="HAMAP" id="MF_01306_B">
    <property type="entry name" value="Ribosomal_uS4_B"/>
    <property type="match status" value="1"/>
</dbReference>
<dbReference type="InterPro" id="IPR022801">
    <property type="entry name" value="Ribosomal_uS4"/>
</dbReference>
<dbReference type="InterPro" id="IPR005709">
    <property type="entry name" value="Ribosomal_uS4_bac-type"/>
</dbReference>
<dbReference type="InterPro" id="IPR018079">
    <property type="entry name" value="Ribosomal_uS4_CS"/>
</dbReference>
<dbReference type="InterPro" id="IPR001912">
    <property type="entry name" value="Ribosomal_uS4_N"/>
</dbReference>
<dbReference type="InterPro" id="IPR002942">
    <property type="entry name" value="S4_RNA-bd"/>
</dbReference>
<dbReference type="InterPro" id="IPR036986">
    <property type="entry name" value="S4_RNA-bd_sf"/>
</dbReference>
<dbReference type="NCBIfam" id="NF003717">
    <property type="entry name" value="PRK05327.1"/>
    <property type="match status" value="1"/>
</dbReference>
<dbReference type="NCBIfam" id="TIGR01017">
    <property type="entry name" value="rpsD_bact"/>
    <property type="match status" value="1"/>
</dbReference>
<dbReference type="PANTHER" id="PTHR11831">
    <property type="entry name" value="30S 40S RIBOSOMAL PROTEIN"/>
    <property type="match status" value="1"/>
</dbReference>
<dbReference type="PANTHER" id="PTHR11831:SF4">
    <property type="entry name" value="SMALL RIBOSOMAL SUBUNIT PROTEIN US4M"/>
    <property type="match status" value="1"/>
</dbReference>
<dbReference type="Pfam" id="PF00163">
    <property type="entry name" value="Ribosomal_S4"/>
    <property type="match status" value="1"/>
</dbReference>
<dbReference type="Pfam" id="PF01479">
    <property type="entry name" value="S4"/>
    <property type="match status" value="1"/>
</dbReference>
<dbReference type="SMART" id="SM01390">
    <property type="entry name" value="Ribosomal_S4"/>
    <property type="match status" value="1"/>
</dbReference>
<dbReference type="SMART" id="SM00363">
    <property type="entry name" value="S4"/>
    <property type="match status" value="1"/>
</dbReference>
<dbReference type="SUPFAM" id="SSF55174">
    <property type="entry name" value="Alpha-L RNA-binding motif"/>
    <property type="match status" value="1"/>
</dbReference>
<dbReference type="PROSITE" id="PS00632">
    <property type="entry name" value="RIBOSOMAL_S4"/>
    <property type="match status" value="1"/>
</dbReference>
<dbReference type="PROSITE" id="PS50889">
    <property type="entry name" value="S4"/>
    <property type="match status" value="1"/>
</dbReference>
<keyword id="KW-0687">Ribonucleoprotein</keyword>
<keyword id="KW-0689">Ribosomal protein</keyword>
<keyword id="KW-0694">RNA-binding</keyword>
<keyword id="KW-0699">rRNA-binding</keyword>
<name>RS4_CLASE</name>
<organism>
    <name type="scientific">Clavibacter sepedonicus</name>
    <name type="common">Clavibacter michiganensis subsp. sepedonicus</name>
    <dbReference type="NCBI Taxonomy" id="31964"/>
    <lineage>
        <taxon>Bacteria</taxon>
        <taxon>Bacillati</taxon>
        <taxon>Actinomycetota</taxon>
        <taxon>Actinomycetes</taxon>
        <taxon>Micrococcales</taxon>
        <taxon>Microbacteriaceae</taxon>
        <taxon>Clavibacter</taxon>
    </lineage>
</organism>
<reference key="1">
    <citation type="journal article" date="2008" name="J. Bacteriol.">
        <title>Genome of the actinomycete plant pathogen Clavibacter michiganensis subsp. sepedonicus suggests recent niche adaptation.</title>
        <authorList>
            <person name="Bentley S.D."/>
            <person name="Corton C."/>
            <person name="Brown S.E."/>
            <person name="Barron A."/>
            <person name="Clark L."/>
            <person name="Doggett J."/>
            <person name="Harris B."/>
            <person name="Ormond D."/>
            <person name="Quail M.A."/>
            <person name="May G."/>
            <person name="Francis D."/>
            <person name="Knudson D."/>
            <person name="Parkhill J."/>
            <person name="Ishimaru C.A."/>
        </authorList>
    </citation>
    <scope>NUCLEOTIDE SEQUENCE [LARGE SCALE GENOMIC DNA]</scope>
    <source>
        <strain>ATCC 33113 / DSM 20744 / JCM 9667 / LMG 2889 / ICMP 2535 / C-1</strain>
    </source>
</reference>
<sequence>MSTKSRTRSKTRLSRALGIPLTPKAAKYLEKRPYAPGEHGRSKRKQDSDYAVRLREKQRLRAQYGIREAQLKIAFQEARRTQGLTGENLVEILEQRLDALVVRSGLARTTAQARQLVVHRHIMVDGKIVDRPSFRVKAGQMIHVKPRSEGTEPFQVAAAGGHADVLPKLPPYLEVELDKLQARLVRLPKRAEVPVTCEVQLVVEYYAAR</sequence>
<comment type="function">
    <text evidence="1">One of the primary rRNA binding proteins, it binds directly to 16S rRNA where it nucleates assembly of the body of the 30S subunit.</text>
</comment>
<comment type="function">
    <text evidence="1">With S5 and S12 plays an important role in translational accuracy.</text>
</comment>
<comment type="subunit">
    <text evidence="1">Part of the 30S ribosomal subunit. Contacts protein S5. The interaction surface between S4 and S5 is involved in control of translational fidelity.</text>
</comment>
<comment type="similarity">
    <text evidence="1">Belongs to the universal ribosomal protein uS4 family.</text>
</comment>
<accession>B0REK0</accession>
<feature type="chain" id="PRO_1000085966" description="Small ribosomal subunit protein uS4">
    <location>
        <begin position="1"/>
        <end position="209"/>
    </location>
</feature>
<feature type="domain" description="S4 RNA-binding" evidence="1">
    <location>
        <begin position="95"/>
        <end position="160"/>
    </location>
</feature>
<feature type="region of interest" description="Disordered" evidence="2">
    <location>
        <begin position="1"/>
        <end position="20"/>
    </location>
</feature>
<feature type="region of interest" description="Disordered" evidence="2">
    <location>
        <begin position="28"/>
        <end position="49"/>
    </location>
</feature>
<feature type="compositionally biased region" description="Basic residues" evidence="2">
    <location>
        <begin position="1"/>
        <end position="13"/>
    </location>
</feature>
<gene>
    <name evidence="1" type="primary">rpsD</name>
    <name type="ordered locus">CMS0727</name>
</gene>
<proteinExistence type="inferred from homology"/>
<protein>
    <recommendedName>
        <fullName evidence="1">Small ribosomal subunit protein uS4</fullName>
    </recommendedName>
    <alternativeName>
        <fullName evidence="3">30S ribosomal protein S4</fullName>
    </alternativeName>
</protein>